<keyword id="KW-0217">Developmental protein</keyword>
<keyword id="KW-0221">Differentiation</keyword>
<keyword id="KW-0238">DNA-binding</keyword>
<keyword id="KW-0524">Neurogenesis</keyword>
<keyword id="KW-0539">Nucleus</keyword>
<keyword id="KW-1185">Reference proteome</keyword>
<keyword id="KW-0678">Repressor</keyword>
<keyword id="KW-0804">Transcription</keyword>
<keyword id="KW-0805">Transcription regulation</keyword>
<dbReference type="EMBL" id="AJ298866">
    <property type="protein sequence ID" value="CAC12895.1"/>
    <property type="molecule type" value="mRNA"/>
</dbReference>
<dbReference type="EMBL" id="BC072772">
    <property type="protein sequence ID" value="AAH72772.1"/>
    <property type="molecule type" value="mRNA"/>
</dbReference>
<dbReference type="RefSeq" id="NP_001079078.1">
    <property type="nucleotide sequence ID" value="NM_001085609.1"/>
</dbReference>
<dbReference type="SMR" id="Q9DEN3"/>
<dbReference type="DNASU" id="373610"/>
<dbReference type="GeneID" id="373610"/>
<dbReference type="KEGG" id="xla:373610"/>
<dbReference type="AGR" id="Xenbase:XB-GENE-6252892"/>
<dbReference type="CTD" id="373610"/>
<dbReference type="Xenbase" id="XB-GENE-6252892">
    <property type="gene designation" value="foxd3.S"/>
</dbReference>
<dbReference type="OrthoDB" id="5402974at2759"/>
<dbReference type="Proteomes" id="UP000186698">
    <property type="component" value="Chromosome 4S"/>
</dbReference>
<dbReference type="Bgee" id="373610">
    <property type="expression patterns" value="Expressed in internal ear and 12 other cell types or tissues"/>
</dbReference>
<dbReference type="GO" id="GO:0005634">
    <property type="term" value="C:nucleus"/>
    <property type="evidence" value="ECO:0007669"/>
    <property type="project" value="UniProtKB-SubCell"/>
</dbReference>
<dbReference type="GO" id="GO:0003677">
    <property type="term" value="F:DNA binding"/>
    <property type="evidence" value="ECO:0000314"/>
    <property type="project" value="UniProtKB"/>
</dbReference>
<dbReference type="GO" id="GO:0000981">
    <property type="term" value="F:DNA-binding transcription factor activity, RNA polymerase II-specific"/>
    <property type="evidence" value="ECO:0000318"/>
    <property type="project" value="GO_Central"/>
</dbReference>
<dbReference type="GO" id="GO:0000978">
    <property type="term" value="F:RNA polymerase II cis-regulatory region sequence-specific DNA binding"/>
    <property type="evidence" value="ECO:0000318"/>
    <property type="project" value="GO_Central"/>
</dbReference>
<dbReference type="GO" id="GO:0009653">
    <property type="term" value="P:anatomical structure morphogenesis"/>
    <property type="evidence" value="ECO:0000318"/>
    <property type="project" value="GO_Central"/>
</dbReference>
<dbReference type="GO" id="GO:0030154">
    <property type="term" value="P:cell differentiation"/>
    <property type="evidence" value="ECO:0000318"/>
    <property type="project" value="GO_Central"/>
</dbReference>
<dbReference type="GO" id="GO:0045892">
    <property type="term" value="P:negative regulation of DNA-templated transcription"/>
    <property type="evidence" value="ECO:0000314"/>
    <property type="project" value="UniProtKB"/>
</dbReference>
<dbReference type="GO" id="GO:0050768">
    <property type="term" value="P:negative regulation of neurogenesis"/>
    <property type="evidence" value="ECO:0000315"/>
    <property type="project" value="UniProtKB"/>
</dbReference>
<dbReference type="GO" id="GO:0007399">
    <property type="term" value="P:nervous system development"/>
    <property type="evidence" value="ECO:0007669"/>
    <property type="project" value="UniProtKB-KW"/>
</dbReference>
<dbReference type="GO" id="GO:0014034">
    <property type="term" value="P:neural crest cell fate commitment"/>
    <property type="evidence" value="ECO:0000250"/>
    <property type="project" value="UniProtKB"/>
</dbReference>
<dbReference type="GO" id="GO:0050769">
    <property type="term" value="P:positive regulation of neurogenesis"/>
    <property type="evidence" value="ECO:0000250"/>
    <property type="project" value="UniProtKB"/>
</dbReference>
<dbReference type="GO" id="GO:0006357">
    <property type="term" value="P:regulation of transcription by RNA polymerase II"/>
    <property type="evidence" value="ECO:0000318"/>
    <property type="project" value="GO_Central"/>
</dbReference>
<dbReference type="CDD" id="cd20047">
    <property type="entry name" value="FH_FOXD3"/>
    <property type="match status" value="1"/>
</dbReference>
<dbReference type="FunFam" id="1.10.10.10:FF:000016">
    <property type="entry name" value="Forkhead box protein I1"/>
    <property type="match status" value="1"/>
</dbReference>
<dbReference type="Gene3D" id="1.10.10.10">
    <property type="entry name" value="Winged helix-like DNA-binding domain superfamily/Winged helix DNA-binding domain"/>
    <property type="match status" value="1"/>
</dbReference>
<dbReference type="InterPro" id="IPR047392">
    <property type="entry name" value="FH_FOXD3"/>
</dbReference>
<dbReference type="InterPro" id="IPR001766">
    <property type="entry name" value="Fork_head_dom"/>
</dbReference>
<dbReference type="InterPro" id="IPR050211">
    <property type="entry name" value="FOX_domain-containing"/>
</dbReference>
<dbReference type="InterPro" id="IPR030456">
    <property type="entry name" value="TF_fork_head_CS_2"/>
</dbReference>
<dbReference type="InterPro" id="IPR036388">
    <property type="entry name" value="WH-like_DNA-bd_sf"/>
</dbReference>
<dbReference type="InterPro" id="IPR036390">
    <property type="entry name" value="WH_DNA-bd_sf"/>
</dbReference>
<dbReference type="PANTHER" id="PTHR11829">
    <property type="entry name" value="FORKHEAD BOX PROTEIN"/>
    <property type="match status" value="1"/>
</dbReference>
<dbReference type="PANTHER" id="PTHR11829:SF361">
    <property type="entry name" value="FORKHEAD BOX PROTEIN D4-LIKE 1"/>
    <property type="match status" value="1"/>
</dbReference>
<dbReference type="Pfam" id="PF00250">
    <property type="entry name" value="Forkhead"/>
    <property type="match status" value="1"/>
</dbReference>
<dbReference type="PRINTS" id="PR00053">
    <property type="entry name" value="FORKHEAD"/>
</dbReference>
<dbReference type="SMART" id="SM00339">
    <property type="entry name" value="FH"/>
    <property type="match status" value="1"/>
</dbReference>
<dbReference type="SUPFAM" id="SSF46785">
    <property type="entry name" value="Winged helix' DNA-binding domain"/>
    <property type="match status" value="1"/>
</dbReference>
<dbReference type="PROSITE" id="PS00658">
    <property type="entry name" value="FORK_HEAD_2"/>
    <property type="match status" value="1"/>
</dbReference>
<dbReference type="PROSITE" id="PS50039">
    <property type="entry name" value="FORK_HEAD_3"/>
    <property type="match status" value="1"/>
</dbReference>
<organism>
    <name type="scientific">Xenopus laevis</name>
    <name type="common">African clawed frog</name>
    <dbReference type="NCBI Taxonomy" id="8355"/>
    <lineage>
        <taxon>Eukaryota</taxon>
        <taxon>Metazoa</taxon>
        <taxon>Chordata</taxon>
        <taxon>Craniata</taxon>
        <taxon>Vertebrata</taxon>
        <taxon>Euteleostomi</taxon>
        <taxon>Amphibia</taxon>
        <taxon>Batrachia</taxon>
        <taxon>Anura</taxon>
        <taxon>Pipoidea</taxon>
        <taxon>Pipidae</taxon>
        <taxon>Xenopodinae</taxon>
        <taxon>Xenopus</taxon>
        <taxon>Xenopus</taxon>
    </lineage>
</organism>
<evidence type="ECO:0000250" key="1"/>
<evidence type="ECO:0000255" key="2"/>
<evidence type="ECO:0000255" key="3">
    <source>
        <dbReference type="PROSITE-ProRule" id="PRU00089"/>
    </source>
</evidence>
<evidence type="ECO:0000256" key="4">
    <source>
        <dbReference type="SAM" id="MobiDB-lite"/>
    </source>
</evidence>
<evidence type="ECO:0000269" key="5">
    <source>
    </source>
</evidence>
<evidence type="ECO:0000305" key="6"/>
<evidence type="ECO:0000312" key="7">
    <source>
        <dbReference type="EMBL" id="AAH72772.1"/>
    </source>
</evidence>
<evidence type="ECO:0000312" key="8">
    <source>
        <dbReference type="EMBL" id="CAC12895.1"/>
    </source>
</evidence>
<proteinExistence type="evidence at transcript level"/>
<accession>Q9DEN3</accession>
<sequence>MTLSSSGSASDMSGQTVLSADDADIDVVGEGDEALDKDSECESPVGHHDEVDALGGKEIPRSPSGSSTDAEGKGESQQQQQEGIQNKPKNSVVKPPYSYIALITMSILQSPQKKLTLSGICEFISSRFPYYREKFPAWQNSIRHNLSLNDCFIKIPREPGNPGKGNYWTLDPQSEDMFDNGSFLRRRKRFKRQQQDTLREQTALMMQSFGAYSLASPYGRHYGLHPAAYTHPAALQYPYIPPVGPMLPPAVPLLPSSELTRKAFSSQLSPSLQLQLSSLSSTAASIIKSEPSSRPSFSIENIIGVSAASSVAPQTFLRPPVTVQSALMSHQPLVLSRSTAAIGPILSVPTNLISGQFLPTAATAVAKWPAQ</sequence>
<protein>
    <recommendedName>
        <fullName>Forkhead box protein D3-B</fullName>
        <shortName>FoxD3-B</shortName>
        <shortName>FoxD3b</shortName>
    </recommendedName>
    <alternativeName>
        <fullName>Fork head domain-related protein 6'</fullName>
        <shortName>xFD-6'</shortName>
    </alternativeName>
</protein>
<feature type="chain" id="PRO_0000250609" description="Forkhead box protein D3-B">
    <location>
        <begin position="1"/>
        <end position="371"/>
    </location>
</feature>
<feature type="DNA-binding region" description="Fork-head" evidence="3">
    <location>
        <begin position="94"/>
        <end position="188"/>
    </location>
</feature>
<feature type="region of interest" description="Disordered" evidence="4">
    <location>
        <begin position="1"/>
        <end position="90"/>
    </location>
</feature>
<feature type="region of interest" description="tle4-binding" evidence="1">
    <location>
        <begin position="297"/>
        <end position="303"/>
    </location>
</feature>
<feature type="compositionally biased region" description="Low complexity" evidence="4">
    <location>
        <begin position="1"/>
        <end position="13"/>
    </location>
</feature>
<feature type="compositionally biased region" description="Acidic residues" evidence="4">
    <location>
        <begin position="21"/>
        <end position="33"/>
    </location>
</feature>
<feature type="compositionally biased region" description="Basic and acidic residues" evidence="4">
    <location>
        <begin position="34"/>
        <end position="51"/>
    </location>
</feature>
<feature type="compositionally biased region" description="Low complexity" evidence="4">
    <location>
        <begin position="75"/>
        <end position="85"/>
    </location>
</feature>
<name>FXD3B_XENLA</name>
<gene>
    <name type="primary">foxd3-b</name>
    <name evidence="8" type="synonym">foxd3b</name>
</gene>
<comment type="function">
    <text evidence="5">Transcriptional repressor that is an essential upstream regulator of neural crest determination and mesoderm induction. Functions by recruiting the transcriptional corepressor tle4. Also acts in a negative auto-regulator loop by inhibiting the transcription of its own gene.</text>
</comment>
<comment type="subunit">
    <text evidence="1">Interacts with tle4.</text>
</comment>
<comment type="subcellular location">
    <subcellularLocation>
        <location evidence="2 6">Nucleus</location>
    </subcellularLocation>
</comment>
<comment type="tissue specificity">
    <text evidence="5">Initially located within the dorsal blastopore lip (Spemann organizer) at the mid-gastrula stage. As expression fades in the neuroectoderm, expression begins in the head mesoderm in two regions at the lateral borders of the presumptive neural plate. These regions correspond to neural crest cells originating from the mesencephalon (anterior) and the rhombencephalon (posterior; rhombomeres 2, 4 and 6). Subsequently expressed within trunk premigratory neural crest cells. Expression disappears when neural crest cells begin to differentiate and migrate, except for those which populate the hyoid arch.</text>
</comment>
<comment type="developmental stage">
    <text evidence="5">Expressed both maternally and zygotically. Maternal expression decreases until the late blastula/early gastrula stage when zygotic expression begins. Expressed at an almost constant level through the subsequent developmental stages.</text>
</comment>
<comment type="induction">
    <text evidence="5">By dorsal wnt signaling. Inhibited by bmp signaling.</text>
</comment>
<comment type="domain">
    <text evidence="1">The C-terminus is required for transcriptional repression and mesoderm induction.</text>
</comment>
<reference evidence="6 8" key="1">
    <citation type="journal article" date="2001" name="Mech. Dev.">
        <title>Overexpression of the transcriptional repressor FoxD3 prevents neural crest formation in Xenopus embryos.</title>
        <authorList>
            <person name="Pohl B.S."/>
            <person name="Knoechel W."/>
        </authorList>
    </citation>
    <scope>NUCLEOTIDE SEQUENCE [MRNA]</scope>
    <scope>FUNCTION</scope>
    <scope>TISSUE SPECIFICITY</scope>
    <scope>DEVELOPMENTAL STAGE</scope>
    <scope>INDUCTION</scope>
    <source>
        <tissue evidence="5">Gastrula</tissue>
    </source>
</reference>
<reference evidence="7" key="2">
    <citation type="submission" date="2004-06" db="EMBL/GenBank/DDBJ databases">
        <authorList>
            <consortium name="NIH - Xenopus Gene Collection (XGC) project"/>
        </authorList>
    </citation>
    <scope>NUCLEOTIDE SEQUENCE [LARGE SCALE MRNA]</scope>
    <source>
        <tissue evidence="7">Embryo</tissue>
    </source>
</reference>
<reference evidence="6" key="3">
    <citation type="journal article" date="2005" name="Gene">
        <title>Of fox and frogs: fox (fork head/winged helix) transcription factors in Xenopus development.</title>
        <authorList>
            <person name="Pohl B.S."/>
            <person name="Knoechel W."/>
        </authorList>
    </citation>
    <scope>REVIEW</scope>
</reference>